<dbReference type="EC" id="3.5.3.1" evidence="2"/>
<dbReference type="EMBL" id="BT021586">
    <property type="protein sequence ID" value="AAX46433.1"/>
    <property type="molecule type" value="mRNA"/>
</dbReference>
<dbReference type="EMBL" id="BC133643">
    <property type="protein sequence ID" value="AAI33644.1"/>
    <property type="molecule type" value="mRNA"/>
</dbReference>
<dbReference type="RefSeq" id="NP_001017942.1">
    <property type="nucleotide sequence ID" value="NM_001017942.1"/>
</dbReference>
<dbReference type="FunCoup" id="Q58DL1">
    <property type="interactions" value="173"/>
</dbReference>
<dbReference type="STRING" id="9913.ENSBTAP00000053934"/>
<dbReference type="PaxDb" id="9913-ENSBTAP00000002529"/>
<dbReference type="GeneID" id="518752"/>
<dbReference type="KEGG" id="bta:518752"/>
<dbReference type="CTD" id="384"/>
<dbReference type="eggNOG" id="KOG2965">
    <property type="taxonomic scope" value="Eukaryota"/>
</dbReference>
<dbReference type="InParanoid" id="Q58DL1"/>
<dbReference type="OrthoDB" id="9992747at2759"/>
<dbReference type="SABIO-RK" id="Q58DL1"/>
<dbReference type="UniPathway" id="UPA00158">
    <property type="reaction ID" value="UER00270"/>
</dbReference>
<dbReference type="Proteomes" id="UP000009136">
    <property type="component" value="Unplaced"/>
</dbReference>
<dbReference type="GO" id="GO:0005737">
    <property type="term" value="C:cytoplasm"/>
    <property type="evidence" value="ECO:0000318"/>
    <property type="project" value="GO_Central"/>
</dbReference>
<dbReference type="GO" id="GO:0005739">
    <property type="term" value="C:mitochondrion"/>
    <property type="evidence" value="ECO:0000318"/>
    <property type="project" value="GO_Central"/>
</dbReference>
<dbReference type="GO" id="GO:0004053">
    <property type="term" value="F:arginase activity"/>
    <property type="evidence" value="ECO:0000318"/>
    <property type="project" value="GO_Central"/>
</dbReference>
<dbReference type="GO" id="GO:0030145">
    <property type="term" value="F:manganese ion binding"/>
    <property type="evidence" value="ECO:0000318"/>
    <property type="project" value="GO_Central"/>
</dbReference>
<dbReference type="GO" id="GO:0002250">
    <property type="term" value="P:adaptive immune response"/>
    <property type="evidence" value="ECO:0007669"/>
    <property type="project" value="UniProtKB-KW"/>
</dbReference>
<dbReference type="GO" id="GO:0019547">
    <property type="term" value="P:arginine catabolic process to ornithine"/>
    <property type="evidence" value="ECO:0000318"/>
    <property type="project" value="GO_Central"/>
</dbReference>
<dbReference type="GO" id="GO:0045087">
    <property type="term" value="P:innate immune response"/>
    <property type="evidence" value="ECO:0007669"/>
    <property type="project" value="UniProtKB-KW"/>
</dbReference>
<dbReference type="GO" id="GO:0000050">
    <property type="term" value="P:urea cycle"/>
    <property type="evidence" value="ECO:0007669"/>
    <property type="project" value="UniProtKB-UniPathway"/>
</dbReference>
<dbReference type="CDD" id="cd09989">
    <property type="entry name" value="Arginase"/>
    <property type="match status" value="1"/>
</dbReference>
<dbReference type="FunFam" id="3.40.800.10:FF:000008">
    <property type="entry name" value="Arginase"/>
    <property type="match status" value="1"/>
</dbReference>
<dbReference type="Gene3D" id="3.40.800.10">
    <property type="entry name" value="Ureohydrolase domain"/>
    <property type="match status" value="1"/>
</dbReference>
<dbReference type="InterPro" id="IPR014033">
    <property type="entry name" value="Arginase"/>
</dbReference>
<dbReference type="InterPro" id="IPR006035">
    <property type="entry name" value="Ureohydrolase"/>
</dbReference>
<dbReference type="InterPro" id="IPR023696">
    <property type="entry name" value="Ureohydrolase_dom_sf"/>
</dbReference>
<dbReference type="InterPro" id="IPR020855">
    <property type="entry name" value="Ureohydrolase_Mn_BS"/>
</dbReference>
<dbReference type="NCBIfam" id="TIGR01229">
    <property type="entry name" value="rocF_arginase"/>
    <property type="match status" value="1"/>
</dbReference>
<dbReference type="PANTHER" id="PTHR43782">
    <property type="entry name" value="ARGINASE"/>
    <property type="match status" value="1"/>
</dbReference>
<dbReference type="PANTHER" id="PTHR43782:SF4">
    <property type="entry name" value="ARGINASE-2, MITOCHONDRIAL"/>
    <property type="match status" value="1"/>
</dbReference>
<dbReference type="Pfam" id="PF00491">
    <property type="entry name" value="Arginase"/>
    <property type="match status" value="1"/>
</dbReference>
<dbReference type="PIRSF" id="PIRSF036979">
    <property type="entry name" value="Arginase"/>
    <property type="match status" value="1"/>
</dbReference>
<dbReference type="PRINTS" id="PR00116">
    <property type="entry name" value="ARGINASE"/>
</dbReference>
<dbReference type="SUPFAM" id="SSF52768">
    <property type="entry name" value="Arginase/deacetylase"/>
    <property type="match status" value="1"/>
</dbReference>
<dbReference type="PROSITE" id="PS01053">
    <property type="entry name" value="ARGINASE_1"/>
    <property type="match status" value="1"/>
</dbReference>
<dbReference type="PROSITE" id="PS51409">
    <property type="entry name" value="ARGINASE_2"/>
    <property type="match status" value="1"/>
</dbReference>
<accession>Q58DL1</accession>
<accession>A2VEA1</accession>
<organism>
    <name type="scientific">Bos taurus</name>
    <name type="common">Bovine</name>
    <dbReference type="NCBI Taxonomy" id="9913"/>
    <lineage>
        <taxon>Eukaryota</taxon>
        <taxon>Metazoa</taxon>
        <taxon>Chordata</taxon>
        <taxon>Craniata</taxon>
        <taxon>Vertebrata</taxon>
        <taxon>Euteleostomi</taxon>
        <taxon>Mammalia</taxon>
        <taxon>Eutheria</taxon>
        <taxon>Laurasiatheria</taxon>
        <taxon>Artiodactyla</taxon>
        <taxon>Ruminantia</taxon>
        <taxon>Pecora</taxon>
        <taxon>Bovidae</taxon>
        <taxon>Bovinae</taxon>
        <taxon>Bos</taxon>
    </lineage>
</organism>
<name>ARGI2_BOVIN</name>
<proteinExistence type="evidence at transcript level"/>
<sequence>MSLRSHLSRLLRTQVHSVRKKSVHSVAVIGAPFSQGQKRKGVEYGPAAVRXAGLMKRLSDLGCHLKDFGDLNFTPVPKDDLYNNLIVNPRSVGLANQELAEVVSRAVSGGYSCVTVGGDHSLAIGTISGHARHCPDLGVIWVDAHADINTPLTTSSGNLHGQPVSFLLRELQDKVPQLPGFSWIKPCISSPSIVYIGLRDVDPPEHFILKNYDIQYFSMRDIDRLGIQKVMEQTFDLLIGKRQRPIHLSFDIDAFDPTLAPATGTPVVGGLTYREGIYITEEIHSTGLLSALDLVEVNPRLAVSEEEAKATASLAVDVIASSFGQTREGGHIVYDQLPTPSSPDESESEERVRI</sequence>
<protein>
    <recommendedName>
        <fullName>Arginase-2, mitochondrial</fullName>
        <ecNumber evidence="2">3.5.3.1</ecNumber>
    </recommendedName>
    <alternativeName>
        <fullName>Arginase II</fullName>
    </alternativeName>
    <alternativeName>
        <fullName>Type II arginase</fullName>
    </alternativeName>
</protein>
<reference key="1">
    <citation type="journal article" date="2005" name="BMC Genomics">
        <title>Characterization of 954 bovine full-CDS cDNA sequences.</title>
        <authorList>
            <person name="Harhay G.P."/>
            <person name="Sonstegard T.S."/>
            <person name="Keele J.W."/>
            <person name="Heaton M.P."/>
            <person name="Clawson M.L."/>
            <person name="Snelling W.M."/>
            <person name="Wiedmann R.T."/>
            <person name="Van Tassell C.P."/>
            <person name="Smith T.P.L."/>
        </authorList>
    </citation>
    <scope>NUCLEOTIDE SEQUENCE [LARGE SCALE MRNA]</scope>
</reference>
<reference key="2">
    <citation type="submission" date="2007-02" db="EMBL/GenBank/DDBJ databases">
        <authorList>
            <consortium name="NIH - Mammalian Gene Collection (MGC) project"/>
        </authorList>
    </citation>
    <scope>NUCLEOTIDE SEQUENCE [LARGE SCALE MRNA]</scope>
    <source>
        <strain>Hereford</strain>
        <tissue>Fetal cerebellum</tissue>
    </source>
</reference>
<gene>
    <name type="primary">ARG2</name>
</gene>
<evidence type="ECO:0000250" key="1">
    <source>
        <dbReference type="UniProtKB" id="O08691"/>
    </source>
</evidence>
<evidence type="ECO:0000250" key="2">
    <source>
        <dbReference type="UniProtKB" id="P05089"/>
    </source>
</evidence>
<evidence type="ECO:0000250" key="3">
    <source>
        <dbReference type="UniProtKB" id="P53608"/>
    </source>
</evidence>
<evidence type="ECO:0000250" key="4">
    <source>
        <dbReference type="UniProtKB" id="P78540"/>
    </source>
</evidence>
<evidence type="ECO:0000255" key="5"/>
<evidence type="ECO:0000255" key="6">
    <source>
        <dbReference type="PROSITE-ProRule" id="PRU00742"/>
    </source>
</evidence>
<evidence type="ECO:0000256" key="7">
    <source>
        <dbReference type="SAM" id="MobiDB-lite"/>
    </source>
</evidence>
<evidence type="ECO:0000305" key="8"/>
<keyword id="KW-1064">Adaptive immunity</keyword>
<keyword id="KW-0056">Arginine metabolism</keyword>
<keyword id="KW-0378">Hydrolase</keyword>
<keyword id="KW-0391">Immunity</keyword>
<keyword id="KW-0399">Innate immunity</keyword>
<keyword id="KW-0464">Manganese</keyword>
<keyword id="KW-0479">Metal-binding</keyword>
<keyword id="KW-0496">Mitochondrion</keyword>
<keyword id="KW-1185">Reference proteome</keyword>
<keyword id="KW-0809">Transit peptide</keyword>
<keyword id="KW-0835">Urea cycle</keyword>
<comment type="function">
    <text evidence="1 4">May play a role in the regulation of extra-urea cycle arginine metabolism and also in down-regulation of nitric oxide synthesis. Extrahepatic arginase functions to regulate L-arginine bioavailability to nitric oxid synthase (NOS). Arginine metabolism is a critical regulator of innate and adaptive immune responses. Seems to be involved in negative regulation of the survival capacity of activated T cells. May suppress inflammation-related signaling in asthmatic airway epithelium. May play a role in promoting prenatal immune suppression. Regulates RPS6KB1 signaling, which promotes endothelial cell senescence and inflammation and implicates NOS3/eNOS dysfunction. Can inhibit endothelial autophagy independently of its enzymatic activity implicating mTORC2 signaling. Involved in vascular smooth muscle cell senescence and apoptosis independently of its enzymatic activity.</text>
</comment>
<comment type="catalytic activity">
    <reaction evidence="2">
        <text>L-arginine + H2O = urea + L-ornithine</text>
        <dbReference type="Rhea" id="RHEA:20569"/>
        <dbReference type="ChEBI" id="CHEBI:15377"/>
        <dbReference type="ChEBI" id="CHEBI:16199"/>
        <dbReference type="ChEBI" id="CHEBI:32682"/>
        <dbReference type="ChEBI" id="CHEBI:46911"/>
        <dbReference type="EC" id="3.5.3.1"/>
    </reaction>
</comment>
<comment type="cofactor">
    <cofactor evidence="6">
        <name>Mn(2+)</name>
        <dbReference type="ChEBI" id="CHEBI:29035"/>
    </cofactor>
    <text evidence="6">Binds 2 manganese ions per subunit.</text>
</comment>
<comment type="pathway">
    <text evidence="2">Nitrogen metabolism; urea cycle; L-ornithine and urea from L-arginine: step 1/1.</text>
</comment>
<comment type="subunit">
    <text evidence="4">Homotrimer.</text>
</comment>
<comment type="subcellular location">
    <subcellularLocation>
        <location evidence="1 4">Mitochondrion</location>
    </subcellularLocation>
</comment>
<comment type="similarity">
    <text evidence="6">Belongs to the arginase family.</text>
</comment>
<feature type="transit peptide" description="Mitochondrion" evidence="5">
    <location>
        <begin position="1"/>
        <end position="22"/>
    </location>
</feature>
<feature type="chain" id="PRO_0000041752" description="Arginase-2, mitochondrial">
    <location>
        <begin position="23"/>
        <end position="354"/>
    </location>
</feature>
<feature type="region of interest" description="Disordered" evidence="7">
    <location>
        <begin position="332"/>
        <end position="354"/>
    </location>
</feature>
<feature type="binding site" evidence="6">
    <location>
        <position position="120"/>
    </location>
    <ligand>
        <name>Mn(2+)</name>
        <dbReference type="ChEBI" id="CHEBI:29035"/>
        <label>1</label>
    </ligand>
</feature>
<feature type="binding site" evidence="6">
    <location>
        <position position="143"/>
    </location>
    <ligand>
        <name>Mn(2+)</name>
        <dbReference type="ChEBI" id="CHEBI:29035"/>
        <label>1</label>
    </ligand>
</feature>
<feature type="binding site" evidence="6">
    <location>
        <position position="143"/>
    </location>
    <ligand>
        <name>Mn(2+)</name>
        <dbReference type="ChEBI" id="CHEBI:29035"/>
        <label>2</label>
    </ligand>
</feature>
<feature type="binding site" evidence="2">
    <location>
        <begin position="145"/>
        <end position="149"/>
    </location>
    <ligand>
        <name>substrate</name>
    </ligand>
</feature>
<feature type="binding site" evidence="6">
    <location>
        <position position="145"/>
    </location>
    <ligand>
        <name>Mn(2+)</name>
        <dbReference type="ChEBI" id="CHEBI:29035"/>
        <label>2</label>
    </ligand>
</feature>
<feature type="binding site" evidence="6">
    <location>
        <position position="147"/>
    </location>
    <ligand>
        <name>Mn(2+)</name>
        <dbReference type="ChEBI" id="CHEBI:29035"/>
        <label>1</label>
    </ligand>
</feature>
<feature type="binding site" evidence="2">
    <location>
        <begin position="156"/>
        <end position="158"/>
    </location>
    <ligand>
        <name>substrate</name>
    </ligand>
</feature>
<feature type="binding site" evidence="2">
    <location>
        <position position="202"/>
    </location>
    <ligand>
        <name>substrate</name>
    </ligand>
</feature>
<feature type="binding site" evidence="6">
    <location>
        <position position="251"/>
    </location>
    <ligand>
        <name>Mn(2+)</name>
        <dbReference type="ChEBI" id="CHEBI:29035"/>
        <label>1</label>
    </ligand>
</feature>
<feature type="binding site" evidence="6">
    <location>
        <position position="251"/>
    </location>
    <ligand>
        <name>Mn(2+)</name>
        <dbReference type="ChEBI" id="CHEBI:29035"/>
        <label>2</label>
    </ligand>
</feature>
<feature type="binding site" evidence="6">
    <location>
        <position position="253"/>
    </location>
    <ligand>
        <name>Mn(2+)</name>
        <dbReference type="ChEBI" id="CHEBI:29035"/>
        <label>2</label>
    </ligand>
</feature>
<feature type="binding site" evidence="3">
    <location>
        <position position="265"/>
    </location>
    <ligand>
        <name>substrate</name>
    </ligand>
</feature>
<feature type="binding site" evidence="4">
    <location>
        <position position="296"/>
    </location>
    <ligand>
        <name>substrate</name>
    </ligand>
</feature>
<feature type="sequence conflict" description="In Ref. 2; AAI33644." evidence="8" ref="2">
    <original>G</original>
    <variation>D</variation>
    <location>
        <position position="276"/>
    </location>
</feature>